<keyword id="KW-0010">Activator</keyword>
<keyword id="KW-0025">Alternative splicing</keyword>
<keyword id="KW-0539">Nucleus</keyword>
<keyword id="KW-1185">Reference proteome</keyword>
<keyword id="KW-0678">Repressor</keyword>
<keyword id="KW-0804">Transcription</keyword>
<keyword id="KW-0805">Transcription regulation</keyword>
<comment type="function">
    <text evidence="3 4 5">Transcriptional regulator that can both act as a coactivator or a corepressor depending on the context. Lacks DNA-binding domains and acts by associating with other transcription factors such as rotund (rn) and squeeze (sqz). Acts as a coactivator of sqz and is required to limit the number of neurons that express the LIM-homeodomain gene apterous and to specify Tv neuronal fate. Acts as a corepressor of rn in wing development and is required to limit the expression of wingless (wg) in the wing hinge, where wg plays a mitogenic role.</text>
</comment>
<comment type="subunit">
    <text evidence="4">Interacts with sqz and rn. Able to bind mammalian EGR1 but not Drosophila EGR-like protein klu.</text>
</comment>
<comment type="subcellular location">
    <subcellularLocation>
        <location evidence="1">Nucleus</location>
    </subcellularLocation>
</comment>
<comment type="alternative products">
    <event type="alternative splicing"/>
    <isoform>
        <id>Q59E55-1</id>
        <name>C</name>
        <sequence type="displayed"/>
    </isoform>
    <isoform>
        <id>Q59E55-2</id>
        <name>B</name>
        <sequence type="described" ref="VSP_041822"/>
    </isoform>
</comment>
<comment type="tissue specificity">
    <text evidence="3 4">Expressed exclusively in a subset of neuroblasts in the embryonic and larval central nervous system (CNS), as well as in several larval imaginal disk tissues. Co-expressed with sqz in a subset of neurons in the embryonic ventral nerve cord and with rn in a circular domain of the distal-most area of the wing disk.</text>
</comment>
<comment type="induction">
    <text evidence="4">Regulated by vestigial (vg) in the wing.</text>
</comment>
<comment type="domain">
    <text evidence="1">The NAB conserved domain 2 (NCD2) is necessary for transcriptional repression.</text>
</comment>
<comment type="disruption phenotype">
    <text evidence="3">Larval locomotion defects and early larval lethality (L1-L2). In the CNS, axon outgrowth/guidance and glial development appear normal; however, a subset of eve(+) neurons forms in reduced numbers.</text>
</comment>
<comment type="similarity">
    <text evidence="7">Belongs to the NAB family.</text>
</comment>
<comment type="sequence caution" evidence="7">
    <conflict type="erroneous initiation">
        <sequence resource="EMBL-CDS" id="ACI46548"/>
    </conflict>
    <text>Extended N-terminus.</text>
</comment>
<feature type="chain" id="PRO_0000372658" description="NGFI-A-binding protein homolog">
    <location>
        <begin position="1"/>
        <end position="625"/>
    </location>
</feature>
<feature type="region of interest" description="Disordered" evidence="2">
    <location>
        <begin position="1"/>
        <end position="47"/>
    </location>
</feature>
<feature type="region of interest" description="Disordered" evidence="2">
    <location>
        <begin position="75"/>
        <end position="111"/>
    </location>
</feature>
<feature type="region of interest" description="NCD1">
    <location>
        <begin position="111"/>
        <end position="189"/>
    </location>
</feature>
<feature type="region of interest" description="Disordered" evidence="2">
    <location>
        <begin position="220"/>
        <end position="247"/>
    </location>
</feature>
<feature type="region of interest" description="Disordered" evidence="2">
    <location>
        <begin position="276"/>
        <end position="305"/>
    </location>
</feature>
<feature type="region of interest" description="NCD2">
    <location>
        <begin position="340"/>
        <end position="427"/>
    </location>
</feature>
<feature type="region of interest" description="Disordered" evidence="2">
    <location>
        <begin position="447"/>
        <end position="480"/>
    </location>
</feature>
<feature type="region of interest" description="Disordered" evidence="2">
    <location>
        <begin position="532"/>
        <end position="578"/>
    </location>
</feature>
<feature type="compositionally biased region" description="Low complexity" evidence="2">
    <location>
        <begin position="79"/>
        <end position="94"/>
    </location>
</feature>
<feature type="compositionally biased region" description="Polar residues" evidence="2">
    <location>
        <begin position="224"/>
        <end position="234"/>
    </location>
</feature>
<feature type="compositionally biased region" description="Polar residues" evidence="2">
    <location>
        <begin position="284"/>
        <end position="305"/>
    </location>
</feature>
<feature type="compositionally biased region" description="Polar residues" evidence="2">
    <location>
        <begin position="558"/>
        <end position="568"/>
    </location>
</feature>
<feature type="splice variant" id="VSP_041822" description="In isoform B." evidence="6">
    <original>TPCNGMEGERSPVSRQMETSSPPRESVDLSGTSSGAALSGVQVISAAGDNIIAVANPALALSPALNEVLALKRSAASPET</original>
    <variation>VSMCWSSTRAFRYPGKAEE</variation>
    <location>
        <begin position="546"/>
        <end position="625"/>
    </location>
</feature>
<feature type="sequence conflict" description="In Ref. 3; ACI46548." evidence="7" ref="3">
    <original>M</original>
    <variation>I</variation>
    <location>
        <position position="194"/>
    </location>
</feature>
<evidence type="ECO:0000250" key="1"/>
<evidence type="ECO:0000256" key="2">
    <source>
        <dbReference type="SAM" id="MobiDB-lite"/>
    </source>
</evidence>
<evidence type="ECO:0000269" key="3">
    <source>
    </source>
</evidence>
<evidence type="ECO:0000269" key="4">
    <source>
    </source>
</evidence>
<evidence type="ECO:0000269" key="5">
    <source>
    </source>
</evidence>
<evidence type="ECO:0000303" key="6">
    <source ref="3"/>
</evidence>
<evidence type="ECO:0000305" key="7"/>
<name>NAB_DROME</name>
<proteinExistence type="evidence at protein level"/>
<organism>
    <name type="scientific">Drosophila melanogaster</name>
    <name type="common">Fruit fly</name>
    <dbReference type="NCBI Taxonomy" id="7227"/>
    <lineage>
        <taxon>Eukaryota</taxon>
        <taxon>Metazoa</taxon>
        <taxon>Ecdysozoa</taxon>
        <taxon>Arthropoda</taxon>
        <taxon>Hexapoda</taxon>
        <taxon>Insecta</taxon>
        <taxon>Pterygota</taxon>
        <taxon>Neoptera</taxon>
        <taxon>Endopterygota</taxon>
        <taxon>Diptera</taxon>
        <taxon>Brachycera</taxon>
        <taxon>Muscomorpha</taxon>
        <taxon>Ephydroidea</taxon>
        <taxon>Drosophilidae</taxon>
        <taxon>Drosophila</taxon>
        <taxon>Sophophora</taxon>
    </lineage>
</organism>
<dbReference type="EMBL" id="AE014296">
    <property type="protein sequence ID" value="AAX52730.3"/>
    <property type="molecule type" value="Genomic_DNA"/>
</dbReference>
<dbReference type="EMBL" id="AE014296">
    <property type="protein sequence ID" value="ACZ94616.1"/>
    <property type="molecule type" value="Genomic_DNA"/>
</dbReference>
<dbReference type="EMBL" id="BT046160">
    <property type="protein sequence ID" value="ACI46548.1"/>
    <property type="status" value="ALT_INIT"/>
    <property type="molecule type" value="mRNA"/>
</dbReference>
<dbReference type="RefSeq" id="NP_001014557.3">
    <molecule id="Q59E55-1"/>
    <property type="nucleotide sequence ID" value="NM_001014557.2"/>
</dbReference>
<dbReference type="RefSeq" id="NP_001163344.1">
    <molecule id="Q59E55-2"/>
    <property type="nucleotide sequence ID" value="NM_001169873.1"/>
</dbReference>
<dbReference type="SMR" id="Q59E55"/>
<dbReference type="BioGRID" id="77955">
    <property type="interactions" value="6"/>
</dbReference>
<dbReference type="FunCoup" id="Q59E55">
    <property type="interactions" value="202"/>
</dbReference>
<dbReference type="IntAct" id="Q59E55">
    <property type="interactions" value="2"/>
</dbReference>
<dbReference type="STRING" id="7227.FBpp0291243"/>
<dbReference type="GlyGen" id="Q59E55">
    <property type="glycosylation" value="2 sites"/>
</dbReference>
<dbReference type="PaxDb" id="7227-FBpp0291243"/>
<dbReference type="EnsemblMetazoa" id="FBtr0302032">
    <molecule id="Q59E55-2"/>
    <property type="protein sequence ID" value="FBpp0291242"/>
    <property type="gene ID" value="FBgn0259986"/>
</dbReference>
<dbReference type="EnsemblMetazoa" id="FBtr0302033">
    <molecule id="Q59E55-1"/>
    <property type="protein sequence ID" value="FBpp0291243"/>
    <property type="gene ID" value="FBgn0259986"/>
</dbReference>
<dbReference type="GeneID" id="3346237"/>
<dbReference type="KEGG" id="dme:Dmel_CG33545"/>
<dbReference type="UCSC" id="CG33545-RA">
    <molecule id="Q59E55-1"/>
    <property type="organism name" value="d. melanogaster"/>
</dbReference>
<dbReference type="AGR" id="FB:FBgn0259986"/>
<dbReference type="CTD" id="3346237"/>
<dbReference type="FlyBase" id="FBgn0259986">
    <property type="gene designation" value="nab"/>
</dbReference>
<dbReference type="VEuPathDB" id="VectorBase:FBgn0259986"/>
<dbReference type="eggNOG" id="KOG3835">
    <property type="taxonomic scope" value="Eukaryota"/>
</dbReference>
<dbReference type="GeneTree" id="ENSGT00390000006330"/>
<dbReference type="InParanoid" id="Q59E55"/>
<dbReference type="OMA" id="TCDEHEF"/>
<dbReference type="OrthoDB" id="10028556at2759"/>
<dbReference type="PhylomeDB" id="Q59E55"/>
<dbReference type="Reactome" id="R-DME-9031628">
    <property type="pathway name" value="NGF-stimulated transcription"/>
</dbReference>
<dbReference type="BioGRID-ORCS" id="3346237">
    <property type="hits" value="0 hits in 3 CRISPR screens"/>
</dbReference>
<dbReference type="GenomeRNAi" id="3346237"/>
<dbReference type="PRO" id="PR:Q59E55"/>
<dbReference type="Proteomes" id="UP000000803">
    <property type="component" value="Chromosome 3L"/>
</dbReference>
<dbReference type="Bgee" id="FBgn0259986">
    <property type="expression patterns" value="Expressed in wing disc and 3 other cell types or tissues"/>
</dbReference>
<dbReference type="ExpressionAtlas" id="Q59E55">
    <property type="expression patterns" value="baseline and differential"/>
</dbReference>
<dbReference type="GO" id="GO:0005634">
    <property type="term" value="C:nucleus"/>
    <property type="evidence" value="ECO:0000318"/>
    <property type="project" value="GO_Central"/>
</dbReference>
<dbReference type="GO" id="GO:0003712">
    <property type="term" value="F:transcription coregulator activity"/>
    <property type="evidence" value="ECO:0000315"/>
    <property type="project" value="FlyBase"/>
</dbReference>
<dbReference type="GO" id="GO:0007626">
    <property type="term" value="P:locomotory behavior"/>
    <property type="evidence" value="ECO:0000315"/>
    <property type="project" value="FlyBase"/>
</dbReference>
<dbReference type="GO" id="GO:0045892">
    <property type="term" value="P:negative regulation of DNA-templated transcription"/>
    <property type="evidence" value="ECO:0007669"/>
    <property type="project" value="InterPro"/>
</dbReference>
<dbReference type="GO" id="GO:0014019">
    <property type="term" value="P:neuroblast development"/>
    <property type="evidence" value="ECO:0000315"/>
    <property type="project" value="FlyBase"/>
</dbReference>
<dbReference type="GO" id="GO:0048666">
    <property type="term" value="P:neuron development"/>
    <property type="evidence" value="ECO:0000315"/>
    <property type="project" value="FlyBase"/>
</dbReference>
<dbReference type="GO" id="GO:0006355">
    <property type="term" value="P:regulation of DNA-templated transcription"/>
    <property type="evidence" value="ECO:0000318"/>
    <property type="project" value="GO_Central"/>
</dbReference>
<dbReference type="GO" id="GO:0035222">
    <property type="term" value="P:wing disc pattern formation"/>
    <property type="evidence" value="ECO:0000315"/>
    <property type="project" value="FlyBase"/>
</dbReference>
<dbReference type="FunFam" id="1.20.120.2010:FF:000001">
    <property type="entry name" value="NGFI-A-binding protein 1 isoform X1"/>
    <property type="match status" value="1"/>
</dbReference>
<dbReference type="Gene3D" id="1.20.120.2010">
    <property type="entry name" value="NAB conserved domain 2"/>
    <property type="match status" value="1"/>
</dbReference>
<dbReference type="InterPro" id="IPR006989">
    <property type="entry name" value="NAB_co-repressor_dom"/>
</dbReference>
<dbReference type="InterPro" id="IPR039040">
    <property type="entry name" value="NAB_fam"/>
</dbReference>
<dbReference type="InterPro" id="IPR006988">
    <property type="entry name" value="Nab_N"/>
</dbReference>
<dbReference type="InterPro" id="IPR038398">
    <property type="entry name" value="NCD2_sf"/>
</dbReference>
<dbReference type="PANTHER" id="PTHR12623">
    <property type="entry name" value="NGFI-A BINDING PROTEIN"/>
    <property type="match status" value="1"/>
</dbReference>
<dbReference type="PANTHER" id="PTHR12623:SF10">
    <property type="entry name" value="NGFI-A-BINDING PROTEIN HOMOLOG"/>
    <property type="match status" value="1"/>
</dbReference>
<dbReference type="Pfam" id="PF04905">
    <property type="entry name" value="NCD2"/>
    <property type="match status" value="1"/>
</dbReference>
<dbReference type="Pfam" id="PF04904">
    <property type="entry name" value="SAM_NCD1"/>
    <property type="match status" value="1"/>
</dbReference>
<reference key="1">
    <citation type="journal article" date="2000" name="Science">
        <title>The genome sequence of Drosophila melanogaster.</title>
        <authorList>
            <person name="Adams M.D."/>
            <person name="Celniker S.E."/>
            <person name="Holt R.A."/>
            <person name="Evans C.A."/>
            <person name="Gocayne J.D."/>
            <person name="Amanatides P.G."/>
            <person name="Scherer S.E."/>
            <person name="Li P.W."/>
            <person name="Hoskins R.A."/>
            <person name="Galle R.F."/>
            <person name="George R.A."/>
            <person name="Lewis S.E."/>
            <person name="Richards S."/>
            <person name="Ashburner M."/>
            <person name="Henderson S.N."/>
            <person name="Sutton G.G."/>
            <person name="Wortman J.R."/>
            <person name="Yandell M.D."/>
            <person name="Zhang Q."/>
            <person name="Chen L.X."/>
            <person name="Brandon R.C."/>
            <person name="Rogers Y.-H.C."/>
            <person name="Blazej R.G."/>
            <person name="Champe M."/>
            <person name="Pfeiffer B.D."/>
            <person name="Wan K.H."/>
            <person name="Doyle C."/>
            <person name="Baxter E.G."/>
            <person name="Helt G."/>
            <person name="Nelson C.R."/>
            <person name="Miklos G.L.G."/>
            <person name="Abril J.F."/>
            <person name="Agbayani A."/>
            <person name="An H.-J."/>
            <person name="Andrews-Pfannkoch C."/>
            <person name="Baldwin D."/>
            <person name="Ballew R.M."/>
            <person name="Basu A."/>
            <person name="Baxendale J."/>
            <person name="Bayraktaroglu L."/>
            <person name="Beasley E.M."/>
            <person name="Beeson K.Y."/>
            <person name="Benos P.V."/>
            <person name="Berman B.P."/>
            <person name="Bhandari D."/>
            <person name="Bolshakov S."/>
            <person name="Borkova D."/>
            <person name="Botchan M.R."/>
            <person name="Bouck J."/>
            <person name="Brokstein P."/>
            <person name="Brottier P."/>
            <person name="Burtis K.C."/>
            <person name="Busam D.A."/>
            <person name="Butler H."/>
            <person name="Cadieu E."/>
            <person name="Center A."/>
            <person name="Chandra I."/>
            <person name="Cherry J.M."/>
            <person name="Cawley S."/>
            <person name="Dahlke C."/>
            <person name="Davenport L.B."/>
            <person name="Davies P."/>
            <person name="de Pablos B."/>
            <person name="Delcher A."/>
            <person name="Deng Z."/>
            <person name="Mays A.D."/>
            <person name="Dew I."/>
            <person name="Dietz S.M."/>
            <person name="Dodson K."/>
            <person name="Doup L.E."/>
            <person name="Downes M."/>
            <person name="Dugan-Rocha S."/>
            <person name="Dunkov B.C."/>
            <person name="Dunn P."/>
            <person name="Durbin K.J."/>
            <person name="Evangelista C.C."/>
            <person name="Ferraz C."/>
            <person name="Ferriera S."/>
            <person name="Fleischmann W."/>
            <person name="Fosler C."/>
            <person name="Gabrielian A.E."/>
            <person name="Garg N.S."/>
            <person name="Gelbart W.M."/>
            <person name="Glasser K."/>
            <person name="Glodek A."/>
            <person name="Gong F."/>
            <person name="Gorrell J.H."/>
            <person name="Gu Z."/>
            <person name="Guan P."/>
            <person name="Harris M."/>
            <person name="Harris N.L."/>
            <person name="Harvey D.A."/>
            <person name="Heiman T.J."/>
            <person name="Hernandez J.R."/>
            <person name="Houck J."/>
            <person name="Hostin D."/>
            <person name="Houston K.A."/>
            <person name="Howland T.J."/>
            <person name="Wei M.-H."/>
            <person name="Ibegwam C."/>
            <person name="Jalali M."/>
            <person name="Kalush F."/>
            <person name="Karpen G.H."/>
            <person name="Ke Z."/>
            <person name="Kennison J.A."/>
            <person name="Ketchum K.A."/>
            <person name="Kimmel B.E."/>
            <person name="Kodira C.D."/>
            <person name="Kraft C.L."/>
            <person name="Kravitz S."/>
            <person name="Kulp D."/>
            <person name="Lai Z."/>
            <person name="Lasko P."/>
            <person name="Lei Y."/>
            <person name="Levitsky A.A."/>
            <person name="Li J.H."/>
            <person name="Li Z."/>
            <person name="Liang Y."/>
            <person name="Lin X."/>
            <person name="Liu X."/>
            <person name="Mattei B."/>
            <person name="McIntosh T.C."/>
            <person name="McLeod M.P."/>
            <person name="McPherson D."/>
            <person name="Merkulov G."/>
            <person name="Milshina N.V."/>
            <person name="Mobarry C."/>
            <person name="Morris J."/>
            <person name="Moshrefi A."/>
            <person name="Mount S.M."/>
            <person name="Moy M."/>
            <person name="Murphy B."/>
            <person name="Murphy L."/>
            <person name="Muzny D.M."/>
            <person name="Nelson D.L."/>
            <person name="Nelson D.R."/>
            <person name="Nelson K.A."/>
            <person name="Nixon K."/>
            <person name="Nusskern D.R."/>
            <person name="Pacleb J.M."/>
            <person name="Palazzolo M."/>
            <person name="Pittman G.S."/>
            <person name="Pan S."/>
            <person name="Pollard J."/>
            <person name="Puri V."/>
            <person name="Reese M.G."/>
            <person name="Reinert K."/>
            <person name="Remington K."/>
            <person name="Saunders R.D.C."/>
            <person name="Scheeler F."/>
            <person name="Shen H."/>
            <person name="Shue B.C."/>
            <person name="Siden-Kiamos I."/>
            <person name="Simpson M."/>
            <person name="Skupski M.P."/>
            <person name="Smith T.J."/>
            <person name="Spier E."/>
            <person name="Spradling A.C."/>
            <person name="Stapleton M."/>
            <person name="Strong R."/>
            <person name="Sun E."/>
            <person name="Svirskas R."/>
            <person name="Tector C."/>
            <person name="Turner R."/>
            <person name="Venter E."/>
            <person name="Wang A.H."/>
            <person name="Wang X."/>
            <person name="Wang Z.-Y."/>
            <person name="Wassarman D.A."/>
            <person name="Weinstock G.M."/>
            <person name="Weissenbach J."/>
            <person name="Williams S.M."/>
            <person name="Woodage T."/>
            <person name="Worley K.C."/>
            <person name="Wu D."/>
            <person name="Yang S."/>
            <person name="Yao Q.A."/>
            <person name="Ye J."/>
            <person name="Yeh R.-F."/>
            <person name="Zaveri J.S."/>
            <person name="Zhan M."/>
            <person name="Zhang G."/>
            <person name="Zhao Q."/>
            <person name="Zheng L."/>
            <person name="Zheng X.H."/>
            <person name="Zhong F.N."/>
            <person name="Zhong W."/>
            <person name="Zhou X."/>
            <person name="Zhu S.C."/>
            <person name="Zhu X."/>
            <person name="Smith H.O."/>
            <person name="Gibbs R.A."/>
            <person name="Myers E.W."/>
            <person name="Rubin G.M."/>
            <person name="Venter J.C."/>
        </authorList>
    </citation>
    <scope>NUCLEOTIDE SEQUENCE [LARGE SCALE GENOMIC DNA]</scope>
    <source>
        <strain>Berkeley</strain>
    </source>
</reference>
<reference key="2">
    <citation type="journal article" date="2002" name="Genome Biol.">
        <title>Annotation of the Drosophila melanogaster euchromatic genome: a systematic review.</title>
        <authorList>
            <person name="Misra S."/>
            <person name="Crosby M.A."/>
            <person name="Mungall C.J."/>
            <person name="Matthews B.B."/>
            <person name="Campbell K.S."/>
            <person name="Hradecky P."/>
            <person name="Huang Y."/>
            <person name="Kaminker J.S."/>
            <person name="Millburn G.H."/>
            <person name="Prochnik S.E."/>
            <person name="Smith C.D."/>
            <person name="Tupy J.L."/>
            <person name="Whitfield E.J."/>
            <person name="Bayraktaroglu L."/>
            <person name="Berman B.P."/>
            <person name="Bettencourt B.R."/>
            <person name="Celniker S.E."/>
            <person name="de Grey A.D.N.J."/>
            <person name="Drysdale R.A."/>
            <person name="Harris N.L."/>
            <person name="Richter J."/>
            <person name="Russo S."/>
            <person name="Schroeder A.J."/>
            <person name="Shu S.Q."/>
            <person name="Stapleton M."/>
            <person name="Yamada C."/>
            <person name="Ashburner M."/>
            <person name="Gelbart W.M."/>
            <person name="Rubin G.M."/>
            <person name="Lewis S.E."/>
        </authorList>
    </citation>
    <scope>GENOME REANNOTATION</scope>
    <source>
        <strain>Berkeley</strain>
    </source>
</reference>
<reference key="3">
    <citation type="submission" date="2008-10" db="EMBL/GenBank/DDBJ databases">
        <authorList>
            <person name="Carlson J."/>
            <person name="Booth B."/>
            <person name="Frise E."/>
            <person name="Park S."/>
            <person name="Wan K."/>
            <person name="Yu C."/>
            <person name="Celniker S."/>
        </authorList>
    </citation>
    <scope>NUCLEOTIDE SEQUENCE [LARGE SCALE MRNA] (ISOFORM B)</scope>
    <source>
        <strain>Berkeley</strain>
        <tissue>Larva</tissue>
        <tissue>Pupae</tissue>
    </source>
</reference>
<reference key="4">
    <citation type="journal article" date="2003" name="Dev. Dyn.">
        <title>Drosophila NAB (dNAB) is an orphan transcriptional co-repressor required for correct CNS and eye development.</title>
        <authorList>
            <person name="Clements M."/>
            <person name="Duncan D."/>
            <person name="Milbrandt J."/>
        </authorList>
    </citation>
    <scope>FUNCTION</scope>
    <scope>TISSUE SPECIFICITY</scope>
    <scope>DISRUPTION PHENOTYPE</scope>
    <scope>LACK OF INTERACTION WITH KLU</scope>
</reference>
<reference key="5">
    <citation type="journal article" date="2007" name="Development">
        <title>Nab controls the activity of the zinc-finger transcription factors Squeeze and Rotund in Drosophila development.</title>
        <authorList>
            <person name="Terriente Felix J."/>
            <person name="Magarinos M."/>
            <person name="Diaz-Benjumea F.J."/>
        </authorList>
    </citation>
    <scope>FUNCTION</scope>
    <scope>TISSUE SPECIFICITY</scope>
    <scope>INDUCTION</scope>
    <scope>INTERACTION WITH RN AND SQZ</scope>
</reference>
<reference key="6">
    <citation type="journal article" date="2008" name="Dev. Biol.">
        <title>The Drosophila gene zfh2 is required to establish proximal-distal domains in the wing disc.</title>
        <authorList>
            <person name="Terriente J."/>
            <person name="Perea D."/>
            <person name="Suzanne M."/>
            <person name="Diaz-Benjumea F.J."/>
        </authorList>
    </citation>
    <scope>FUNCTION</scope>
</reference>
<protein>
    <recommendedName>
        <fullName>NGFI-A-binding protein homolog</fullName>
        <shortName>dNAB</shortName>
    </recommendedName>
</protein>
<sequence length="625" mass="66488">MEASSNPTTPTTAVATTTSTSSPSPAASTSSKGHSQSATASASASATQSQLLTTSLEMPKTEDLYNLSVASGLSEGQRSLSGAPSASSSPIMSPQGKIFGRNANGTMITTSRPGNEAEVQLYRVLQRASLLAYYDTLLEMGGDDVQQLYDAGEEEFLEIMALVGMASKPLHVRRLQKALHEWANNPGLFQGPMMPHLGLCETPPKPALIFNPDTTPALPRQKFPSFNPSGSSFMPSPVPPAPLPASASVPAPTVPLATQISCPSAPSVPLPLVLPPNPLTSSPHPSANSNLPANTAHQVSSSSPQLTPVLTEAQIQRITMCADKIGRQLPQREPRAQTTRKRTTRELEQVIAMGEQDPRRMDEIRKYSAIYGRFDCKRRPEKPLTLHEVCVNEAAAQLCRNPQTIWLLTRRDELFPLARQIVKDAGFGHSASIARYGGLLTQLPSQGAGLGGGRAPGDTDCESSDAAVPSKRQRLSSTEAAQLPLDLNREAVEDSRYNLFAMYQKFAKPPFDLSEIAKFSVSKAADYEDNDSRFSFSNSSSPTMPTPCNGMEGERSPVSRQMETSSPPRESVDLSGTSSGAALSGVQVISAAGDNIIAVANPALALSPALNEVLALKRSAASPET</sequence>
<accession>Q59E55</accession>
<accession>B5X541</accession>
<accession>E1JIC7</accession>
<gene>
    <name type="primary">nab</name>
    <name type="ORF">CG33545</name>
</gene>